<comment type="catalytic activity">
    <reaction evidence="1">
        <text>tRNA(Gly) + glycine + ATP = glycyl-tRNA(Gly) + AMP + diphosphate</text>
        <dbReference type="Rhea" id="RHEA:16013"/>
        <dbReference type="Rhea" id="RHEA-COMP:9664"/>
        <dbReference type="Rhea" id="RHEA-COMP:9683"/>
        <dbReference type="ChEBI" id="CHEBI:30616"/>
        <dbReference type="ChEBI" id="CHEBI:33019"/>
        <dbReference type="ChEBI" id="CHEBI:57305"/>
        <dbReference type="ChEBI" id="CHEBI:78442"/>
        <dbReference type="ChEBI" id="CHEBI:78522"/>
        <dbReference type="ChEBI" id="CHEBI:456215"/>
        <dbReference type="EC" id="6.1.1.14"/>
    </reaction>
</comment>
<comment type="subunit">
    <text evidence="1">Tetramer of two alpha and two beta subunits.</text>
</comment>
<comment type="subcellular location">
    <subcellularLocation>
        <location evidence="1">Cytoplasm</location>
    </subcellularLocation>
</comment>
<comment type="similarity">
    <text evidence="1">Belongs to the class-II aminoacyl-tRNA synthetase family.</text>
</comment>
<keyword id="KW-0030">Aminoacyl-tRNA synthetase</keyword>
<keyword id="KW-0067">ATP-binding</keyword>
<keyword id="KW-0963">Cytoplasm</keyword>
<keyword id="KW-0436">Ligase</keyword>
<keyword id="KW-0547">Nucleotide-binding</keyword>
<keyword id="KW-0648">Protein biosynthesis</keyword>
<reference key="1">
    <citation type="submission" date="2007-11" db="EMBL/GenBank/DDBJ databases">
        <authorList>
            <consortium name="The Salmonella enterica serovar Paratyphi B Genome Sequencing Project"/>
            <person name="McClelland M."/>
            <person name="Sanderson E.K."/>
            <person name="Porwollik S."/>
            <person name="Spieth J."/>
            <person name="Clifton W.S."/>
            <person name="Fulton R."/>
            <person name="Cordes M."/>
            <person name="Wollam A."/>
            <person name="Shah N."/>
            <person name="Pepin K."/>
            <person name="Bhonagiri V."/>
            <person name="Nash W."/>
            <person name="Johnson M."/>
            <person name="Thiruvilangam P."/>
            <person name="Wilson R."/>
        </authorList>
    </citation>
    <scope>NUCLEOTIDE SEQUENCE [LARGE SCALE GENOMIC DNA]</scope>
    <source>
        <strain>ATCC BAA-1250 / SPB7</strain>
    </source>
</reference>
<gene>
    <name evidence="1" type="primary">glyS</name>
    <name type="ordered locus">SPAB_04538</name>
</gene>
<feature type="chain" id="PRO_1000078546" description="Glycine--tRNA ligase beta subunit">
    <location>
        <begin position="1"/>
        <end position="689"/>
    </location>
</feature>
<organism>
    <name type="scientific">Salmonella paratyphi B (strain ATCC BAA-1250 / SPB7)</name>
    <dbReference type="NCBI Taxonomy" id="1016998"/>
    <lineage>
        <taxon>Bacteria</taxon>
        <taxon>Pseudomonadati</taxon>
        <taxon>Pseudomonadota</taxon>
        <taxon>Gammaproteobacteria</taxon>
        <taxon>Enterobacterales</taxon>
        <taxon>Enterobacteriaceae</taxon>
        <taxon>Salmonella</taxon>
    </lineage>
</organism>
<accession>A9MUU1</accession>
<evidence type="ECO:0000255" key="1">
    <source>
        <dbReference type="HAMAP-Rule" id="MF_00255"/>
    </source>
</evidence>
<protein>
    <recommendedName>
        <fullName evidence="1">Glycine--tRNA ligase beta subunit</fullName>
        <ecNumber evidence="1">6.1.1.14</ecNumber>
    </recommendedName>
    <alternativeName>
        <fullName evidence="1">Glycyl-tRNA synthetase beta subunit</fullName>
        <shortName evidence="1">GlyRS</shortName>
    </alternativeName>
</protein>
<name>SYGB_SALPB</name>
<sequence>MSEKTFLVEIGTEELPPKALRSLAESFAANFTAELDNAGLAHGNVEWFAAPRRLALKVANLAESQPDREVEKRGPAIAQAFDAEGKPSKAAEGWARGCGITVDQAERLKTDKGEWLLYRAHVKGESTEALVPNMVATSLAKLPIPKLMRWGASDVHFVRPVHTVTLLLGDKVIPATILGIQSDRVIRGHRFMGEPEFTIDNADQYPQILLERGKVIADYEARKAKIKADAEEAARKIGGNADLSESLLEEVASLVEWPVVLTAKFEEKFLAVPAEALVYTMKGDQKYFPVYDNAGKLLPNFIFVANIESKDPTQIISGNEKVVRPRLADAEFFFNTDRKKRLEDHLPRLQTVLFQQQLGTLRDKTDRIQALAGWIAGQIGADVNHATRAGLLSKCDLMTNMVFEFTDTQGVMGMHYARHDGEAEDVAVALNEQYQPRFAGDDLPSNPVACALAIADKMDTLAGIFGIGQHPKGDKDPFALRRAALGVLRIIVEKNLALDLQTLTEEAVRLYGDKLTNANVVDDVIDFMLGRFRAWYQDEGYTVDTIQAVLARRPTRPADFDARMKAVSHFRTLEEASALAAANKRVSNILAKATEPLNDIVHASVLKEAAEIELARHLVVLRDKLQPYFADGRYQEALIELAALRAPVDEFFENVMVNAEEKDIRINRLTLLSKLRELFLQVADISLLQ</sequence>
<dbReference type="EC" id="6.1.1.14" evidence="1"/>
<dbReference type="EMBL" id="CP000886">
    <property type="protein sequence ID" value="ABX69851.1"/>
    <property type="molecule type" value="Genomic_DNA"/>
</dbReference>
<dbReference type="RefSeq" id="WP_001291736.1">
    <property type="nucleotide sequence ID" value="NC_010102.1"/>
</dbReference>
<dbReference type="SMR" id="A9MUU1"/>
<dbReference type="KEGG" id="spq:SPAB_04538"/>
<dbReference type="PATRIC" id="fig|1016998.12.peg.4269"/>
<dbReference type="HOGENOM" id="CLU_007220_2_2_6"/>
<dbReference type="BioCyc" id="SENT1016998:SPAB_RS18465-MONOMER"/>
<dbReference type="Proteomes" id="UP000008556">
    <property type="component" value="Chromosome"/>
</dbReference>
<dbReference type="GO" id="GO:0005829">
    <property type="term" value="C:cytosol"/>
    <property type="evidence" value="ECO:0007669"/>
    <property type="project" value="TreeGrafter"/>
</dbReference>
<dbReference type="GO" id="GO:0004814">
    <property type="term" value="F:arginine-tRNA ligase activity"/>
    <property type="evidence" value="ECO:0007669"/>
    <property type="project" value="InterPro"/>
</dbReference>
<dbReference type="GO" id="GO:0005524">
    <property type="term" value="F:ATP binding"/>
    <property type="evidence" value="ECO:0007669"/>
    <property type="project" value="UniProtKB-UniRule"/>
</dbReference>
<dbReference type="GO" id="GO:0004820">
    <property type="term" value="F:glycine-tRNA ligase activity"/>
    <property type="evidence" value="ECO:0007669"/>
    <property type="project" value="UniProtKB-UniRule"/>
</dbReference>
<dbReference type="GO" id="GO:0006420">
    <property type="term" value="P:arginyl-tRNA aminoacylation"/>
    <property type="evidence" value="ECO:0007669"/>
    <property type="project" value="InterPro"/>
</dbReference>
<dbReference type="GO" id="GO:0006426">
    <property type="term" value="P:glycyl-tRNA aminoacylation"/>
    <property type="evidence" value="ECO:0007669"/>
    <property type="project" value="UniProtKB-UniRule"/>
</dbReference>
<dbReference type="HAMAP" id="MF_00255">
    <property type="entry name" value="Gly_tRNA_synth_beta"/>
    <property type="match status" value="1"/>
</dbReference>
<dbReference type="InterPro" id="IPR008909">
    <property type="entry name" value="DALR_anticod-bd"/>
</dbReference>
<dbReference type="InterPro" id="IPR015944">
    <property type="entry name" value="Gly-tRNA-synth_bsu"/>
</dbReference>
<dbReference type="InterPro" id="IPR006194">
    <property type="entry name" value="Gly-tRNA-synth_heterodimer"/>
</dbReference>
<dbReference type="NCBIfam" id="TIGR00211">
    <property type="entry name" value="glyS"/>
    <property type="match status" value="1"/>
</dbReference>
<dbReference type="PANTHER" id="PTHR30075:SF2">
    <property type="entry name" value="GLYCINE--TRNA LIGASE, CHLOROPLASTIC_MITOCHONDRIAL 2"/>
    <property type="match status" value="1"/>
</dbReference>
<dbReference type="PANTHER" id="PTHR30075">
    <property type="entry name" value="GLYCYL-TRNA SYNTHETASE"/>
    <property type="match status" value="1"/>
</dbReference>
<dbReference type="Pfam" id="PF05746">
    <property type="entry name" value="DALR_1"/>
    <property type="match status" value="1"/>
</dbReference>
<dbReference type="Pfam" id="PF02092">
    <property type="entry name" value="tRNA_synt_2f"/>
    <property type="match status" value="1"/>
</dbReference>
<dbReference type="PRINTS" id="PR01045">
    <property type="entry name" value="TRNASYNTHGB"/>
</dbReference>
<dbReference type="SUPFAM" id="SSF109604">
    <property type="entry name" value="HD-domain/PDEase-like"/>
    <property type="match status" value="1"/>
</dbReference>
<dbReference type="PROSITE" id="PS50861">
    <property type="entry name" value="AA_TRNA_LIGASE_II_GLYAB"/>
    <property type="match status" value="1"/>
</dbReference>
<proteinExistence type="inferred from homology"/>